<dbReference type="EC" id="3.6.1.7"/>
<dbReference type="EMBL" id="AE017333">
    <property type="protein sequence ID" value="AAU39723.1"/>
    <property type="molecule type" value="Genomic_DNA"/>
</dbReference>
<dbReference type="EMBL" id="CP000002">
    <property type="protein sequence ID" value="AAU22375.1"/>
    <property type="molecule type" value="Genomic_DNA"/>
</dbReference>
<dbReference type="RefSeq" id="WP_003179727.1">
    <property type="nucleotide sequence ID" value="NC_006322.1"/>
</dbReference>
<dbReference type="SMR" id="Q65MJ1"/>
<dbReference type="STRING" id="279010.BL03100"/>
<dbReference type="KEGG" id="bld:BLi00788"/>
<dbReference type="KEGG" id="bli:BL03100"/>
<dbReference type="eggNOG" id="COG1254">
    <property type="taxonomic scope" value="Bacteria"/>
</dbReference>
<dbReference type="HOGENOM" id="CLU_141932_2_0_9"/>
<dbReference type="Proteomes" id="UP000000606">
    <property type="component" value="Chromosome"/>
</dbReference>
<dbReference type="GO" id="GO:0003998">
    <property type="term" value="F:acylphosphatase activity"/>
    <property type="evidence" value="ECO:0007669"/>
    <property type="project" value="UniProtKB-EC"/>
</dbReference>
<dbReference type="Gene3D" id="3.30.70.100">
    <property type="match status" value="1"/>
</dbReference>
<dbReference type="InterPro" id="IPR020456">
    <property type="entry name" value="Acylphosphatase"/>
</dbReference>
<dbReference type="InterPro" id="IPR001792">
    <property type="entry name" value="Acylphosphatase-like_dom"/>
</dbReference>
<dbReference type="InterPro" id="IPR036046">
    <property type="entry name" value="Acylphosphatase-like_dom_sf"/>
</dbReference>
<dbReference type="InterPro" id="IPR017968">
    <property type="entry name" value="Acylphosphatase_CS"/>
</dbReference>
<dbReference type="NCBIfam" id="NF010995">
    <property type="entry name" value="PRK14420.1"/>
    <property type="match status" value="1"/>
</dbReference>
<dbReference type="PANTHER" id="PTHR47268">
    <property type="entry name" value="ACYLPHOSPHATASE"/>
    <property type="match status" value="1"/>
</dbReference>
<dbReference type="PANTHER" id="PTHR47268:SF4">
    <property type="entry name" value="ACYLPHOSPHATASE"/>
    <property type="match status" value="1"/>
</dbReference>
<dbReference type="Pfam" id="PF00708">
    <property type="entry name" value="Acylphosphatase"/>
    <property type="match status" value="1"/>
</dbReference>
<dbReference type="PRINTS" id="PR00112">
    <property type="entry name" value="ACYLPHPHTASE"/>
</dbReference>
<dbReference type="SUPFAM" id="SSF54975">
    <property type="entry name" value="Acylphosphatase/BLUF domain-like"/>
    <property type="match status" value="1"/>
</dbReference>
<dbReference type="PROSITE" id="PS00150">
    <property type="entry name" value="ACYLPHOSPHATASE_1"/>
    <property type="match status" value="1"/>
</dbReference>
<dbReference type="PROSITE" id="PS00151">
    <property type="entry name" value="ACYLPHOSPHATASE_2"/>
    <property type="match status" value="1"/>
</dbReference>
<dbReference type="PROSITE" id="PS51160">
    <property type="entry name" value="ACYLPHOSPHATASE_3"/>
    <property type="match status" value="1"/>
</dbReference>
<keyword id="KW-0378">Hydrolase</keyword>
<keyword id="KW-1185">Reference proteome</keyword>
<reference key="1">
    <citation type="journal article" date="2004" name="J. Mol. Microbiol. Biotechnol.">
        <title>The complete genome sequence of Bacillus licheniformis DSM13, an organism with great industrial potential.</title>
        <authorList>
            <person name="Veith B."/>
            <person name="Herzberg C."/>
            <person name="Steckel S."/>
            <person name="Feesche J."/>
            <person name="Maurer K.H."/>
            <person name="Ehrenreich P."/>
            <person name="Baeumer S."/>
            <person name="Henne A."/>
            <person name="Liesegang H."/>
            <person name="Merkl R."/>
            <person name="Ehrenreich A."/>
            <person name="Gottschalk G."/>
        </authorList>
    </citation>
    <scope>NUCLEOTIDE SEQUENCE [LARGE SCALE GENOMIC DNA]</scope>
    <source>
        <strain>ATCC 14580 / DSM 13 / JCM 2505 / CCUG 7422 / NBRC 12200 / NCIMB 9375 / NCTC 10341 / NRRL NRS-1264 / Gibson 46</strain>
    </source>
</reference>
<reference key="2">
    <citation type="journal article" date="2004" name="Genome Biol.">
        <title>Complete genome sequence of the industrial bacterium Bacillus licheniformis and comparisons with closely related Bacillus species.</title>
        <authorList>
            <person name="Rey M.W."/>
            <person name="Ramaiya P."/>
            <person name="Nelson B.A."/>
            <person name="Brody-Karpin S.D."/>
            <person name="Zaretsky E.J."/>
            <person name="Tang M."/>
            <person name="Lopez de Leon A."/>
            <person name="Xiang H."/>
            <person name="Gusti V."/>
            <person name="Clausen I.G."/>
            <person name="Olsen P.B."/>
            <person name="Rasmussen M.D."/>
            <person name="Andersen J.T."/>
            <person name="Joergensen P.L."/>
            <person name="Larsen T.S."/>
            <person name="Sorokin A."/>
            <person name="Bolotin A."/>
            <person name="Lapidus A."/>
            <person name="Galleron N."/>
            <person name="Ehrlich S.D."/>
            <person name="Berka R.M."/>
        </authorList>
    </citation>
    <scope>NUCLEOTIDE SEQUENCE [LARGE SCALE GENOMIC DNA]</scope>
    <source>
        <strain>ATCC 14580 / DSM 13 / JCM 2505 / CCUG 7422 / NBRC 12200 / NCIMB 9375 / NCTC 10341 / NRRL NRS-1264 / Gibson 46</strain>
    </source>
</reference>
<proteinExistence type="inferred from homology"/>
<comment type="catalytic activity">
    <reaction>
        <text>an acyl phosphate + H2O = a carboxylate + phosphate + H(+)</text>
        <dbReference type="Rhea" id="RHEA:14965"/>
        <dbReference type="ChEBI" id="CHEBI:15377"/>
        <dbReference type="ChEBI" id="CHEBI:15378"/>
        <dbReference type="ChEBI" id="CHEBI:29067"/>
        <dbReference type="ChEBI" id="CHEBI:43474"/>
        <dbReference type="ChEBI" id="CHEBI:59918"/>
        <dbReference type="EC" id="3.6.1.7"/>
    </reaction>
</comment>
<comment type="similarity">
    <text evidence="2">Belongs to the acylphosphatase family.</text>
</comment>
<evidence type="ECO:0000255" key="1">
    <source>
        <dbReference type="PROSITE-ProRule" id="PRU00520"/>
    </source>
</evidence>
<evidence type="ECO:0000305" key="2"/>
<name>ACYP_BACLD</name>
<gene>
    <name type="primary">acyP</name>
    <name type="ordered locus">BLi00788</name>
    <name type="ordered locus">BL03100</name>
</gene>
<organism>
    <name type="scientific">Bacillus licheniformis (strain ATCC 14580 / DSM 13 / JCM 2505 / CCUG 7422 / NBRC 12200 / NCIMB 9375 / NCTC 10341 / NRRL NRS-1264 / Gibson 46)</name>
    <dbReference type="NCBI Taxonomy" id="279010"/>
    <lineage>
        <taxon>Bacteria</taxon>
        <taxon>Bacillati</taxon>
        <taxon>Bacillota</taxon>
        <taxon>Bacilli</taxon>
        <taxon>Bacillales</taxon>
        <taxon>Bacillaceae</taxon>
        <taxon>Bacillus</taxon>
    </lineage>
</organism>
<accession>Q65MJ1</accession>
<accession>Q62XY3</accession>
<protein>
    <recommendedName>
        <fullName>Acylphosphatase</fullName>
        <ecNumber>3.6.1.7</ecNumber>
    </recommendedName>
    <alternativeName>
        <fullName>Acylphosphate phosphohydrolase</fullName>
    </alternativeName>
</protein>
<feature type="chain" id="PRO_0000326657" description="Acylphosphatase">
    <location>
        <begin position="1"/>
        <end position="90"/>
    </location>
</feature>
<feature type="domain" description="Acylphosphatase-like" evidence="1">
    <location>
        <begin position="3"/>
        <end position="90"/>
    </location>
</feature>
<feature type="active site" evidence="1">
    <location>
        <position position="18"/>
    </location>
</feature>
<feature type="active site" evidence="1">
    <location>
        <position position="36"/>
    </location>
</feature>
<sequence length="90" mass="10444">MLQYRIIVDGRVQGVGFRYFVQMEADKHKLTGWVRNRDDGTVEIRAEGLEESLKQFLKAIQKGSPFSKVTDVKVEETKELDGFQKFNISY</sequence>